<reference key="1">
    <citation type="journal article" date="1986" name="FEBS Lett.">
        <title>Direct immunological identification of full-length cDNA clones for plant protein without gene fusion to E. coli protein.</title>
        <authorList>
            <person name="Nakamura K."/>
            <person name="Hattori T."/>
            <person name="Asahi T."/>
        </authorList>
    </citation>
    <scope>NUCLEOTIDE SEQUENCE [MRNA]</scope>
    <source>
        <strain>cv. Sumi</strain>
        <tissue>Tuber</tissue>
    </source>
</reference>
<feature type="signal peptide" evidence="2">
    <location>
        <begin position="1"/>
        <end position="23"/>
    </location>
</feature>
<feature type="chain" id="PRO_0000296701" description="Patatin-16">
    <location>
        <begin position="24"/>
        <end position="386"/>
    </location>
</feature>
<feature type="domain" description="PNPLA" evidence="3">
    <location>
        <begin position="32"/>
        <end position="229"/>
    </location>
</feature>
<feature type="coiled-coil region" evidence="2">
    <location>
        <begin position="360"/>
        <end position="384"/>
    </location>
</feature>
<feature type="short sequence motif" description="GXGXXG" evidence="3">
    <location>
        <begin position="36"/>
        <end position="41"/>
    </location>
</feature>
<feature type="short sequence motif" description="GXSXG" evidence="3">
    <location>
        <begin position="75"/>
        <end position="79"/>
    </location>
</feature>
<feature type="short sequence motif" description="DGA/G" evidence="3">
    <location>
        <begin position="215"/>
        <end position="217"/>
    </location>
</feature>
<feature type="active site" description="Nucleophile" evidence="3">
    <location>
        <position position="77"/>
    </location>
</feature>
<feature type="active site" description="Proton acceptor" evidence="3">
    <location>
        <position position="215"/>
    </location>
</feature>
<feature type="glycosylation site" description="N-linked (GlcNAc...) asparagine" evidence="2">
    <location>
        <position position="115"/>
    </location>
</feature>
<comment type="function">
    <text>Probable lipolytic acyl hydrolase (LAH), an activity which is thought to be involved in the response of tubers to pathogens.</text>
</comment>
<comment type="subcellular location">
    <subcellularLocation>
        <location evidence="1">Vacuole</location>
    </subcellularLocation>
</comment>
<comment type="domain">
    <text>The nitrogen atoms of the two glycine residues in the GGXR motif define the oxyanion hole, and stabilize the oxyanion that forms during the nucleophilic attack by the catalytic serine during substrate cleavage.</text>
</comment>
<comment type="miscellaneous">
    <text>Patatin have a dual role as a somatic storage protein and as an enzyme involved in host resistance. This tuber protein represents approximately 40% of the total protein in mature tubers.</text>
</comment>
<comment type="similarity">
    <text evidence="4">Belongs to the patatin family.</text>
</comment>
<keyword id="KW-0175">Coiled coil</keyword>
<keyword id="KW-0325">Glycoprotein</keyword>
<keyword id="KW-0378">Hydrolase</keyword>
<keyword id="KW-0442">Lipid degradation</keyword>
<keyword id="KW-0443">Lipid metabolism</keyword>
<keyword id="KW-0611">Plant defense</keyword>
<keyword id="KW-1185">Reference proteome</keyword>
<keyword id="KW-0732">Signal</keyword>
<keyword id="KW-0758">Storage protein</keyword>
<keyword id="KW-0926">Vacuole</keyword>
<dbReference type="EC" id="3.1.1.-"/>
<dbReference type="EMBL" id="Z27221">
    <property type="protein sequence ID" value="CAA81735.1"/>
    <property type="molecule type" value="mRNA"/>
</dbReference>
<dbReference type="PIR" id="A23634">
    <property type="entry name" value="A23634"/>
</dbReference>
<dbReference type="PIR" id="T07592">
    <property type="entry name" value="T07592"/>
</dbReference>
<dbReference type="SMR" id="Q41487"/>
<dbReference type="InParanoid" id="Q41487"/>
<dbReference type="Proteomes" id="UP000011115">
    <property type="component" value="Unassembled WGS sequence"/>
</dbReference>
<dbReference type="ExpressionAtlas" id="Q41487">
    <property type="expression patterns" value="baseline and differential"/>
</dbReference>
<dbReference type="GO" id="GO:0005773">
    <property type="term" value="C:vacuole"/>
    <property type="evidence" value="ECO:0007669"/>
    <property type="project" value="UniProtKB-SubCell"/>
</dbReference>
<dbReference type="GO" id="GO:0047372">
    <property type="term" value="F:monoacylglycerol lipase activity"/>
    <property type="evidence" value="ECO:0000318"/>
    <property type="project" value="GO_Central"/>
</dbReference>
<dbReference type="GO" id="GO:0045735">
    <property type="term" value="F:nutrient reservoir activity"/>
    <property type="evidence" value="ECO:0007669"/>
    <property type="project" value="UniProtKB-KW"/>
</dbReference>
<dbReference type="GO" id="GO:0004620">
    <property type="term" value="F:phospholipase activity"/>
    <property type="evidence" value="ECO:0000318"/>
    <property type="project" value="GO_Central"/>
</dbReference>
<dbReference type="GO" id="GO:0006952">
    <property type="term" value="P:defense response"/>
    <property type="evidence" value="ECO:0007669"/>
    <property type="project" value="UniProtKB-KW"/>
</dbReference>
<dbReference type="GO" id="GO:0016042">
    <property type="term" value="P:lipid catabolic process"/>
    <property type="evidence" value="ECO:0007669"/>
    <property type="project" value="UniProtKB-KW"/>
</dbReference>
<dbReference type="Gene3D" id="3.40.1090.10">
    <property type="entry name" value="Cytosolic phospholipase A2 catalytic domain"/>
    <property type="match status" value="1"/>
</dbReference>
<dbReference type="InterPro" id="IPR016035">
    <property type="entry name" value="Acyl_Trfase/lysoPLipase"/>
</dbReference>
<dbReference type="InterPro" id="IPR002641">
    <property type="entry name" value="PNPLA_dom"/>
</dbReference>
<dbReference type="PANTHER" id="PTHR32176:SF85">
    <property type="entry name" value="PATATIN GROUP D-2"/>
    <property type="match status" value="1"/>
</dbReference>
<dbReference type="PANTHER" id="PTHR32176">
    <property type="entry name" value="XYLOSE ISOMERASE"/>
    <property type="match status" value="1"/>
</dbReference>
<dbReference type="Pfam" id="PF01734">
    <property type="entry name" value="Patatin"/>
    <property type="match status" value="1"/>
</dbReference>
<dbReference type="SUPFAM" id="SSF52151">
    <property type="entry name" value="FabD/lysophospholipase-like"/>
    <property type="match status" value="1"/>
</dbReference>
<dbReference type="PROSITE" id="PS51635">
    <property type="entry name" value="PNPLA"/>
    <property type="match status" value="1"/>
</dbReference>
<name>PAT16_SOLTU</name>
<accession>Q41487</accession>
<accession>Q41473</accession>
<sequence length="386" mass="42628">MATTKSFLILIVMILATTSSTFASLEEMVTVLSIDGGGIKGIIPGTILEFLEGQLQKMDNNADARLADYFDVIGGTSTGGLLTAMITTPNENNRPFAAANEIVPFYFEHGPHIFNSSTGQFFRKYDGKYLMQVLQEKLGETRVHQALTEVAISSFDIKTNKPVIFTKSNLAKSPELDAKMYDICYSTAAAPTYFPPHYFATNTINGDKYELNLVDGAVATVADPALLSVSVATRRAQEDPAFASIRSLNYKKMLLLSLGTGTTSEFDKTHTAEETAKWGALQWMLVIQQMTEAASSYMTDYYLSTVFQDLHSQNNYLRVQENPLTGTTTKADDASEANMELLAQVGENLLKKPVSKDNPETYEEALKRFAKLLSDRKKLRANKASY</sequence>
<proteinExistence type="evidence at transcript level"/>
<evidence type="ECO:0000250" key="1"/>
<evidence type="ECO:0000255" key="2"/>
<evidence type="ECO:0000255" key="3">
    <source>
        <dbReference type="PROSITE-ProRule" id="PRU01161"/>
    </source>
</evidence>
<evidence type="ECO:0000305" key="4"/>
<organism>
    <name type="scientific">Solanum tuberosum</name>
    <name type="common">Potato</name>
    <dbReference type="NCBI Taxonomy" id="4113"/>
    <lineage>
        <taxon>Eukaryota</taxon>
        <taxon>Viridiplantae</taxon>
        <taxon>Streptophyta</taxon>
        <taxon>Embryophyta</taxon>
        <taxon>Tracheophyta</taxon>
        <taxon>Spermatophyta</taxon>
        <taxon>Magnoliopsida</taxon>
        <taxon>eudicotyledons</taxon>
        <taxon>Gunneridae</taxon>
        <taxon>Pentapetalae</taxon>
        <taxon>asterids</taxon>
        <taxon>lamiids</taxon>
        <taxon>Solanales</taxon>
        <taxon>Solanaceae</taxon>
        <taxon>Solanoideae</taxon>
        <taxon>Solaneae</taxon>
        <taxon>Solanum</taxon>
    </lineage>
</organism>
<protein>
    <recommendedName>
        <fullName>Patatin-16</fullName>
        <ecNumber>3.1.1.-</ecNumber>
    </recommendedName>
</protein>